<name>CNTA_STAAM</name>
<comment type="function">
    <text evidence="3">Part of the ABC transporter complex CntABCDF (Opp1) involved in the uptake of metal in complex with the metallophore staphylopine (StP). May be involved in the import of a large array of divalent metals ions such as nickel, cobalt, zinc, copper and iron. Binds the metal via the metallophore StP, and transfers the StP-metal complex to the membrane-bound permease.</text>
</comment>
<comment type="subunit">
    <text evidence="6">The complex is composed of two ATP-binding proteins (CntD and CntF), two transmembrane proteins (CntB and CntC) and a solute-binding protein (CntA).</text>
</comment>
<comment type="subcellular location">
    <subcellularLocation>
        <location evidence="2">Cell membrane</location>
        <topology evidence="2">Lipid-anchor</topology>
    </subcellularLocation>
</comment>
<comment type="induction">
    <text evidence="3">Up-regulated in metal-poor media.</text>
</comment>
<comment type="disruption phenotype">
    <text evidence="3">Deletion of the cntABCDF genes decreases StP intracellular levels and decreases the import of iron, zinc, nickel and cobalt.</text>
</comment>
<comment type="similarity">
    <text evidence="5">Belongs to the bacterial solute-binding protein 5 family.</text>
</comment>
<protein>
    <recommendedName>
        <fullName evidence="5">Metal-staphylopine-binding protein CntA</fullName>
    </recommendedName>
</protein>
<organism>
    <name type="scientific">Staphylococcus aureus (strain Mu50 / ATCC 700699)</name>
    <dbReference type="NCBI Taxonomy" id="158878"/>
    <lineage>
        <taxon>Bacteria</taxon>
        <taxon>Bacillati</taxon>
        <taxon>Bacillota</taxon>
        <taxon>Bacilli</taxon>
        <taxon>Bacillales</taxon>
        <taxon>Staphylococcaceae</taxon>
        <taxon>Staphylococcus</taxon>
    </lineage>
</organism>
<evidence type="ECO:0000250" key="1">
    <source>
        <dbReference type="UniProtKB" id="Q2FVE7"/>
    </source>
</evidence>
<evidence type="ECO:0000255" key="2">
    <source>
        <dbReference type="PROSITE-ProRule" id="PRU00303"/>
    </source>
</evidence>
<evidence type="ECO:0000269" key="3">
    <source>
    </source>
</evidence>
<evidence type="ECO:0000303" key="4">
    <source>
    </source>
</evidence>
<evidence type="ECO:0000305" key="5"/>
<evidence type="ECO:0000305" key="6">
    <source>
    </source>
</evidence>
<evidence type="ECO:0000312" key="7">
    <source>
        <dbReference type="EMBL" id="BAB58629.1"/>
    </source>
</evidence>
<feature type="signal peptide" evidence="2">
    <location>
        <begin position="1"/>
        <end position="20"/>
    </location>
</feature>
<feature type="chain" id="PRO_5002612961" description="Metal-staphylopine-binding protein CntA" evidence="2">
    <location>
        <begin position="21"/>
        <end position="532"/>
    </location>
</feature>
<feature type="binding site" evidence="1">
    <location>
        <position position="165"/>
    </location>
    <ligand>
        <name>staphylopine</name>
        <dbReference type="ChEBI" id="CHEBI:141669"/>
    </ligand>
</feature>
<feature type="binding site" evidence="1">
    <location>
        <position position="418"/>
    </location>
    <ligand>
        <name>staphylopine</name>
        <dbReference type="ChEBI" id="CHEBI:141669"/>
    </ligand>
</feature>
<feature type="binding site" evidence="1">
    <location>
        <position position="448"/>
    </location>
    <ligand>
        <name>staphylopine</name>
        <dbReference type="ChEBI" id="CHEBI:141669"/>
    </ligand>
</feature>
<feature type="lipid moiety-binding region" description="N-palmitoyl cysteine" evidence="2">
    <location>
        <position position="21"/>
    </location>
</feature>
<feature type="lipid moiety-binding region" description="S-diacylglycerol cysteine" evidence="2">
    <location>
        <position position="21"/>
    </location>
</feature>
<dbReference type="EMBL" id="BA000017">
    <property type="protein sequence ID" value="BAB58629.1"/>
    <property type="molecule type" value="Genomic_DNA"/>
</dbReference>
<dbReference type="RefSeq" id="WP_001229087.1">
    <property type="nucleotide sequence ID" value="NC_002758.2"/>
</dbReference>
<dbReference type="SMR" id="A0A0H3JTL0"/>
<dbReference type="KEGG" id="sav:SAV2467"/>
<dbReference type="HOGENOM" id="CLU_017028_7_5_9"/>
<dbReference type="PhylomeDB" id="A0A0H3JTL0"/>
<dbReference type="Proteomes" id="UP000002481">
    <property type="component" value="Chromosome"/>
</dbReference>
<dbReference type="GO" id="GO:0043190">
    <property type="term" value="C:ATP-binding cassette (ABC) transporter complex"/>
    <property type="evidence" value="ECO:0007669"/>
    <property type="project" value="InterPro"/>
</dbReference>
<dbReference type="GO" id="GO:0030288">
    <property type="term" value="C:outer membrane-bounded periplasmic space"/>
    <property type="evidence" value="ECO:0007669"/>
    <property type="project" value="TreeGrafter"/>
</dbReference>
<dbReference type="GO" id="GO:0020037">
    <property type="term" value="F:heme binding"/>
    <property type="evidence" value="ECO:0007669"/>
    <property type="project" value="InterPro"/>
</dbReference>
<dbReference type="GO" id="GO:0016151">
    <property type="term" value="F:nickel cation binding"/>
    <property type="evidence" value="ECO:0007669"/>
    <property type="project" value="InterPro"/>
</dbReference>
<dbReference type="GO" id="GO:1904680">
    <property type="term" value="F:peptide transmembrane transporter activity"/>
    <property type="evidence" value="ECO:0007669"/>
    <property type="project" value="TreeGrafter"/>
</dbReference>
<dbReference type="GO" id="GO:0006824">
    <property type="term" value="P:cobalt ion transport"/>
    <property type="evidence" value="ECO:0007669"/>
    <property type="project" value="UniProtKB-KW"/>
</dbReference>
<dbReference type="GO" id="GO:0006825">
    <property type="term" value="P:copper ion transport"/>
    <property type="evidence" value="ECO:0007669"/>
    <property type="project" value="UniProtKB-KW"/>
</dbReference>
<dbReference type="GO" id="GO:0006826">
    <property type="term" value="P:iron ion transport"/>
    <property type="evidence" value="ECO:0007669"/>
    <property type="project" value="UniProtKB-KW"/>
</dbReference>
<dbReference type="GO" id="GO:0015675">
    <property type="term" value="P:nickel cation transport"/>
    <property type="evidence" value="ECO:0007669"/>
    <property type="project" value="UniProtKB-KW"/>
</dbReference>
<dbReference type="GO" id="GO:0015833">
    <property type="term" value="P:peptide transport"/>
    <property type="evidence" value="ECO:0007669"/>
    <property type="project" value="TreeGrafter"/>
</dbReference>
<dbReference type="GO" id="GO:0006829">
    <property type="term" value="P:zinc ion transport"/>
    <property type="evidence" value="ECO:0007669"/>
    <property type="project" value="UniProtKB-KW"/>
</dbReference>
<dbReference type="CDD" id="cd08489">
    <property type="entry name" value="PBP2_NikA"/>
    <property type="match status" value="1"/>
</dbReference>
<dbReference type="Gene3D" id="3.10.105.10">
    <property type="entry name" value="Dipeptide-binding Protein, Domain 3"/>
    <property type="match status" value="1"/>
</dbReference>
<dbReference type="Gene3D" id="3.40.190.10">
    <property type="entry name" value="Periplasmic binding protein-like II"/>
    <property type="match status" value="1"/>
</dbReference>
<dbReference type="InterPro" id="IPR011980">
    <property type="entry name" value="CntA-like"/>
</dbReference>
<dbReference type="InterPro" id="IPR030678">
    <property type="entry name" value="Peptide/Ni-bd"/>
</dbReference>
<dbReference type="InterPro" id="IPR039424">
    <property type="entry name" value="SBP_5"/>
</dbReference>
<dbReference type="InterPro" id="IPR023765">
    <property type="entry name" value="SBP_5_CS"/>
</dbReference>
<dbReference type="InterPro" id="IPR000914">
    <property type="entry name" value="SBP_5_dom"/>
</dbReference>
<dbReference type="NCBIfam" id="TIGR02294">
    <property type="entry name" value="nickel_nikA"/>
    <property type="match status" value="1"/>
</dbReference>
<dbReference type="NCBIfam" id="NF047575">
    <property type="entry name" value="opine_bind_CntA"/>
    <property type="match status" value="1"/>
</dbReference>
<dbReference type="PANTHER" id="PTHR30290:SF37">
    <property type="entry name" value="NICKEL-BINDING PERIPLASMIC PROTEIN"/>
    <property type="match status" value="1"/>
</dbReference>
<dbReference type="PANTHER" id="PTHR30290">
    <property type="entry name" value="PERIPLASMIC BINDING COMPONENT OF ABC TRANSPORTER"/>
    <property type="match status" value="1"/>
</dbReference>
<dbReference type="Pfam" id="PF00496">
    <property type="entry name" value="SBP_bac_5"/>
    <property type="match status" value="1"/>
</dbReference>
<dbReference type="PIRSF" id="PIRSF002741">
    <property type="entry name" value="MppA"/>
    <property type="match status" value="1"/>
</dbReference>
<dbReference type="SUPFAM" id="SSF53850">
    <property type="entry name" value="Periplasmic binding protein-like II"/>
    <property type="match status" value="1"/>
</dbReference>
<dbReference type="PROSITE" id="PS51257">
    <property type="entry name" value="PROKAR_LIPOPROTEIN"/>
    <property type="match status" value="1"/>
</dbReference>
<dbReference type="PROSITE" id="PS01040">
    <property type="entry name" value="SBP_BACTERIAL_5"/>
    <property type="match status" value="1"/>
</dbReference>
<keyword id="KW-1003">Cell membrane</keyword>
<keyword id="KW-0170">Cobalt</keyword>
<keyword id="KW-0171">Cobalt transport</keyword>
<keyword id="KW-0186">Copper</keyword>
<keyword id="KW-0187">Copper transport</keyword>
<keyword id="KW-0406">Ion transport</keyword>
<keyword id="KW-0408">Iron</keyword>
<keyword id="KW-0410">Iron transport</keyword>
<keyword id="KW-0449">Lipoprotein</keyword>
<keyword id="KW-0472">Membrane</keyword>
<keyword id="KW-0533">Nickel</keyword>
<keyword id="KW-0921">Nickel transport</keyword>
<keyword id="KW-0564">Palmitate</keyword>
<keyword id="KW-0732">Signal</keyword>
<keyword id="KW-0813">Transport</keyword>
<keyword id="KW-0862">Zinc</keyword>
<keyword id="KW-0864">Zinc transport</keyword>
<accession>A0A0H3JTL0</accession>
<gene>
    <name evidence="4" type="primary">cntA</name>
    <name evidence="7" type="ordered locus">SAV2467</name>
</gene>
<reference key="1">
    <citation type="journal article" date="2001" name="Lancet">
        <title>Whole genome sequencing of meticillin-resistant Staphylococcus aureus.</title>
        <authorList>
            <person name="Kuroda M."/>
            <person name="Ohta T."/>
            <person name="Uchiyama I."/>
            <person name="Baba T."/>
            <person name="Yuzawa H."/>
            <person name="Kobayashi I."/>
            <person name="Cui L."/>
            <person name="Oguchi A."/>
            <person name="Aoki K."/>
            <person name="Nagai Y."/>
            <person name="Lian J.-Q."/>
            <person name="Ito T."/>
            <person name="Kanamori M."/>
            <person name="Matsumaru H."/>
            <person name="Maruyama A."/>
            <person name="Murakami H."/>
            <person name="Hosoyama A."/>
            <person name="Mizutani-Ui Y."/>
            <person name="Takahashi N.K."/>
            <person name="Sawano T."/>
            <person name="Inoue R."/>
            <person name="Kaito C."/>
            <person name="Sekimizu K."/>
            <person name="Hirakawa H."/>
            <person name="Kuhara S."/>
            <person name="Goto S."/>
            <person name="Yabuzaki J."/>
            <person name="Kanehisa M."/>
            <person name="Yamashita A."/>
            <person name="Oshima K."/>
            <person name="Furuya K."/>
            <person name="Yoshino C."/>
            <person name="Shiba T."/>
            <person name="Hattori M."/>
            <person name="Ogasawara N."/>
            <person name="Hayashi H."/>
            <person name="Hiramatsu K."/>
        </authorList>
    </citation>
    <scope>NUCLEOTIDE SEQUENCE [LARGE SCALE GENOMIC DNA]</scope>
    <source>
        <strain>Mu50 / ATCC 700699</strain>
    </source>
</reference>
<reference key="2">
    <citation type="journal article" date="2016" name="Science">
        <title>Biosynthesis of a broad-spectrum nicotianamine-like metallophore in Staphylococcus aureus.</title>
        <authorList>
            <person name="Ghssein G."/>
            <person name="Brutesco C."/>
            <person name="Ouerdane L."/>
            <person name="Fojcik C."/>
            <person name="Izaute A."/>
            <person name="Wang S."/>
            <person name="Hajjar C."/>
            <person name="Lobinski R."/>
            <person name="Lemaire D."/>
            <person name="Richaud P."/>
            <person name="Voulhoux R."/>
            <person name="Espaillat A."/>
            <person name="Cava F."/>
            <person name="Pignol D."/>
            <person name="Borezee-Durant E."/>
            <person name="Arnoux P."/>
        </authorList>
    </citation>
    <scope>FUNCTION</scope>
    <scope>SUBUNIT</scope>
    <scope>INDUCTION</scope>
    <scope>DISRUPTION PHENOTYPE</scope>
    <source>
        <strain>Mu50 / ATCC 700699</strain>
    </source>
</reference>
<proteinExistence type="evidence at protein level"/>
<sequence>MRKLTKMSAMLLASGLILTGCGGNKGLEEKKENKQLTYTTVKDIGDMNPHVYGGSMSAESMIYEPLVRNTKDGIKPLLAKKWDVSEDGKTYTFHLRDDVKFHDGTTFDADAVKKNIDAVQQNKKLHSWLKISTLIDNVKVKDKYTVELNLKEAYQPALAELAMPRPYVFVSPKDFKNGTTKDGVKKFDGTGPFKLGEHKKDESADFNKNDQYWGEKSKLNKVQAKVMPAGETAFLSMKKGETNFAFTDDRGTDSLDKDSLKQLKDTGDYQVKRSQPMNTKMLVVNSGKKDNAVSDKTVRQAIGHMVNRDKIAKEILDGQEKPATQLFAKNVTDINFDMPTRKYDLKKAESLLDEAGWKKGKDSDVRQKDGKNLEMAMYYDKGSSSQKEQAEYLQAEFKKMGIKLNINGETSDKIAERRTSGDYDLMFNQTWGLLYDPQSTIAAFKAKNGYESATSGIENKDKIYNSIDDAFKIQNGKERSDAYKNILKQIDDEGIFIPISHGSMTVVAPKDLEKVSFTQSQYELPFNEMQYK</sequence>